<comment type="function">
    <text>Catalyzes the synthesis of activated sulfate.</text>
</comment>
<comment type="catalytic activity">
    <reaction evidence="1">
        <text>adenosine 5'-phosphosulfate + ATP = 3'-phosphoadenylyl sulfate + ADP + H(+)</text>
        <dbReference type="Rhea" id="RHEA:24152"/>
        <dbReference type="ChEBI" id="CHEBI:15378"/>
        <dbReference type="ChEBI" id="CHEBI:30616"/>
        <dbReference type="ChEBI" id="CHEBI:58243"/>
        <dbReference type="ChEBI" id="CHEBI:58339"/>
        <dbReference type="ChEBI" id="CHEBI:456216"/>
        <dbReference type="EC" id="2.7.1.25"/>
    </reaction>
</comment>
<comment type="pathway">
    <text evidence="1">Sulfur metabolism; hydrogen sulfide biosynthesis; sulfite from sulfate: step 2/3.</text>
</comment>
<comment type="similarity">
    <text evidence="1">Belongs to the APS kinase family.</text>
</comment>
<organism>
    <name type="scientific">Vibrio vulnificus (strain YJ016)</name>
    <dbReference type="NCBI Taxonomy" id="196600"/>
    <lineage>
        <taxon>Bacteria</taxon>
        <taxon>Pseudomonadati</taxon>
        <taxon>Pseudomonadota</taxon>
        <taxon>Gammaproteobacteria</taxon>
        <taxon>Vibrionales</taxon>
        <taxon>Vibrionaceae</taxon>
        <taxon>Vibrio</taxon>
    </lineage>
</organism>
<protein>
    <recommendedName>
        <fullName evidence="1">Adenylyl-sulfate kinase</fullName>
        <ecNumber evidence="1">2.7.1.25</ecNumber>
    </recommendedName>
    <alternativeName>
        <fullName evidence="1">APS kinase</fullName>
    </alternativeName>
    <alternativeName>
        <fullName evidence="1">ATP adenosine-5'-phosphosulfate 3'-phosphotransferase</fullName>
    </alternativeName>
    <alternativeName>
        <fullName evidence="1">Adenosine-5'-phosphosulfate kinase</fullName>
    </alternativeName>
</protein>
<keyword id="KW-0067">ATP-binding</keyword>
<keyword id="KW-0418">Kinase</keyword>
<keyword id="KW-0547">Nucleotide-binding</keyword>
<keyword id="KW-0597">Phosphoprotein</keyword>
<keyword id="KW-0808">Transferase</keyword>
<dbReference type="EC" id="2.7.1.25" evidence="1"/>
<dbReference type="EMBL" id="BA000037">
    <property type="protein sequence ID" value="BAC93178.1"/>
    <property type="molecule type" value="Genomic_DNA"/>
</dbReference>
<dbReference type="RefSeq" id="WP_011078798.1">
    <property type="nucleotide sequence ID" value="NC_005139.1"/>
</dbReference>
<dbReference type="SMR" id="Q7MPF0"/>
<dbReference type="STRING" id="672.VV93_v1c03840"/>
<dbReference type="KEGG" id="vvy:VV0414"/>
<dbReference type="eggNOG" id="COG0529">
    <property type="taxonomic scope" value="Bacteria"/>
</dbReference>
<dbReference type="HOGENOM" id="CLU_046932_1_0_6"/>
<dbReference type="UniPathway" id="UPA00140">
    <property type="reaction ID" value="UER00205"/>
</dbReference>
<dbReference type="Proteomes" id="UP000002675">
    <property type="component" value="Chromosome I"/>
</dbReference>
<dbReference type="GO" id="GO:0004020">
    <property type="term" value="F:adenylylsulfate kinase activity"/>
    <property type="evidence" value="ECO:0007669"/>
    <property type="project" value="UniProtKB-UniRule"/>
</dbReference>
<dbReference type="GO" id="GO:0005524">
    <property type="term" value="F:ATP binding"/>
    <property type="evidence" value="ECO:0007669"/>
    <property type="project" value="UniProtKB-UniRule"/>
</dbReference>
<dbReference type="GO" id="GO:0070814">
    <property type="term" value="P:hydrogen sulfide biosynthetic process"/>
    <property type="evidence" value="ECO:0007669"/>
    <property type="project" value="UniProtKB-UniRule"/>
</dbReference>
<dbReference type="GO" id="GO:0000103">
    <property type="term" value="P:sulfate assimilation"/>
    <property type="evidence" value="ECO:0007669"/>
    <property type="project" value="UniProtKB-UniRule"/>
</dbReference>
<dbReference type="CDD" id="cd02027">
    <property type="entry name" value="APSK"/>
    <property type="match status" value="1"/>
</dbReference>
<dbReference type="FunFam" id="3.40.50.300:FF:000212">
    <property type="entry name" value="Adenylyl-sulfate kinase"/>
    <property type="match status" value="1"/>
</dbReference>
<dbReference type="Gene3D" id="3.40.50.300">
    <property type="entry name" value="P-loop containing nucleotide triphosphate hydrolases"/>
    <property type="match status" value="1"/>
</dbReference>
<dbReference type="HAMAP" id="MF_00065">
    <property type="entry name" value="Adenylyl_sulf_kinase"/>
    <property type="match status" value="1"/>
</dbReference>
<dbReference type="InterPro" id="IPR002891">
    <property type="entry name" value="APS_kinase"/>
</dbReference>
<dbReference type="InterPro" id="IPR027417">
    <property type="entry name" value="P-loop_NTPase"/>
</dbReference>
<dbReference type="NCBIfam" id="TIGR00455">
    <property type="entry name" value="apsK"/>
    <property type="match status" value="1"/>
</dbReference>
<dbReference type="NCBIfam" id="NF003013">
    <property type="entry name" value="PRK03846.1"/>
    <property type="match status" value="1"/>
</dbReference>
<dbReference type="PANTHER" id="PTHR11055:SF63">
    <property type="entry name" value="ADENYLYL-SULFATE KINASE 1, CHLOROPLASTIC"/>
    <property type="match status" value="1"/>
</dbReference>
<dbReference type="PANTHER" id="PTHR11055">
    <property type="entry name" value="BIFUNCTIONAL 3'-PHOSPHOADENOSINE 5'-PHOSPHOSULFATE SYNTHASE"/>
    <property type="match status" value="1"/>
</dbReference>
<dbReference type="Pfam" id="PF01583">
    <property type="entry name" value="APS_kinase"/>
    <property type="match status" value="1"/>
</dbReference>
<dbReference type="SUPFAM" id="SSF52540">
    <property type="entry name" value="P-loop containing nucleoside triphosphate hydrolases"/>
    <property type="match status" value="1"/>
</dbReference>
<proteinExistence type="inferred from homology"/>
<feature type="chain" id="PRO_0000105926" description="Adenylyl-sulfate kinase">
    <location>
        <begin position="1"/>
        <end position="207"/>
    </location>
</feature>
<feature type="active site" description="Phosphoserine intermediate" evidence="1">
    <location>
        <position position="113"/>
    </location>
</feature>
<feature type="binding site" evidence="1">
    <location>
        <begin position="39"/>
        <end position="46"/>
    </location>
    <ligand>
        <name>ATP</name>
        <dbReference type="ChEBI" id="CHEBI:30616"/>
    </ligand>
</feature>
<evidence type="ECO:0000255" key="1">
    <source>
        <dbReference type="HAMAP-Rule" id="MF_00065"/>
    </source>
</evidence>
<accession>Q7MPF0</accession>
<gene>
    <name evidence="1" type="primary">cysC</name>
    <name type="ordered locus">VV0414</name>
</gene>
<sequence length="207" mass="22886">MSSVIAQKDENVVWHQHAVTKTQRADLKQQKPAVLWFTGLSGAGKSTVAGALENRLAEQGFHTYLLDGDNVRHGLCSDLGFSTQDRRENIRRIGELAKLMADAGLIVLTAFISPHRAERQLVRDLLPEGEFIEVFVNTSLEVCEQRDPKGLYKKARAGEIANFTGIDSEYEVPLNPEIDLPAGEKGIEALVDLLVEQLTLRGVISPR</sequence>
<reference key="1">
    <citation type="journal article" date="2003" name="Genome Res.">
        <title>Comparative genome analysis of Vibrio vulnificus, a marine pathogen.</title>
        <authorList>
            <person name="Chen C.-Y."/>
            <person name="Wu K.-M."/>
            <person name="Chang Y.-C."/>
            <person name="Chang C.-H."/>
            <person name="Tsai H.-C."/>
            <person name="Liao T.-L."/>
            <person name="Liu Y.-M."/>
            <person name="Chen H.-J."/>
            <person name="Shen A.B.-T."/>
            <person name="Li J.-C."/>
            <person name="Su T.-L."/>
            <person name="Shao C.-P."/>
            <person name="Lee C.-T."/>
            <person name="Hor L.-I."/>
            <person name="Tsai S.-F."/>
        </authorList>
    </citation>
    <scope>NUCLEOTIDE SEQUENCE [LARGE SCALE GENOMIC DNA]</scope>
    <source>
        <strain>YJ016</strain>
    </source>
</reference>
<name>CYSC_VIBVY</name>